<sequence length="146" mass="16291">MRNEMHLQFSALSQNESFARVTVAAFVAQLDPTLDELTEIKTVVSEAVTNAIIHGYENDPSGVVYISVIIEGHTVHLTIRDHGKGIENVEEARQPLFTTKPELERSGMGFTIMENFMDEVNIYSKVNEGTTVELIKHLTKSKALCN</sequence>
<accession>B7GKG6</accession>
<keyword id="KW-0067">ATP-binding</keyword>
<keyword id="KW-0418">Kinase</keyword>
<keyword id="KW-0547">Nucleotide-binding</keyword>
<keyword id="KW-0723">Serine/threonine-protein kinase</keyword>
<keyword id="KW-0749">Sporulation</keyword>
<keyword id="KW-0808">Transferase</keyword>
<proteinExistence type="inferred from homology"/>
<name>SP2AB_ANOFW</name>
<organism>
    <name type="scientific">Anoxybacillus flavithermus (strain DSM 21510 / WK1)</name>
    <dbReference type="NCBI Taxonomy" id="491915"/>
    <lineage>
        <taxon>Bacteria</taxon>
        <taxon>Bacillati</taxon>
        <taxon>Bacillota</taxon>
        <taxon>Bacilli</taxon>
        <taxon>Bacillales</taxon>
        <taxon>Anoxybacillaceae</taxon>
        <taxon>Anoxybacillus</taxon>
    </lineage>
</organism>
<protein>
    <recommendedName>
        <fullName evidence="1">Anti-sigma F factor</fullName>
        <ecNumber evidence="1">2.7.11.1</ecNumber>
    </recommendedName>
    <alternativeName>
        <fullName evidence="1">Stage II sporulation protein AB</fullName>
    </alternativeName>
</protein>
<feature type="chain" id="PRO_1000130801" description="Anti-sigma F factor">
    <location>
        <begin position="1"/>
        <end position="146"/>
    </location>
</feature>
<evidence type="ECO:0000255" key="1">
    <source>
        <dbReference type="HAMAP-Rule" id="MF_00637"/>
    </source>
</evidence>
<comment type="function">
    <text evidence="1">Binds to sigma F and blocks its ability to form an RNA polymerase holoenzyme (E-sigma F). Phosphorylates SpoIIAA on a serine residue. This phosphorylation may enable SpoIIAA to act as an anti-anti-sigma factor that counteracts SpoIIAB and thus releases sigma F from inhibition.</text>
</comment>
<comment type="catalytic activity">
    <reaction evidence="1">
        <text>L-seryl-[protein] + ATP = O-phospho-L-seryl-[protein] + ADP + H(+)</text>
        <dbReference type="Rhea" id="RHEA:17989"/>
        <dbReference type="Rhea" id="RHEA-COMP:9863"/>
        <dbReference type="Rhea" id="RHEA-COMP:11604"/>
        <dbReference type="ChEBI" id="CHEBI:15378"/>
        <dbReference type="ChEBI" id="CHEBI:29999"/>
        <dbReference type="ChEBI" id="CHEBI:30616"/>
        <dbReference type="ChEBI" id="CHEBI:83421"/>
        <dbReference type="ChEBI" id="CHEBI:456216"/>
        <dbReference type="EC" id="2.7.11.1"/>
    </reaction>
</comment>
<comment type="catalytic activity">
    <reaction evidence="1">
        <text>L-threonyl-[protein] + ATP = O-phospho-L-threonyl-[protein] + ADP + H(+)</text>
        <dbReference type="Rhea" id="RHEA:46608"/>
        <dbReference type="Rhea" id="RHEA-COMP:11060"/>
        <dbReference type="Rhea" id="RHEA-COMP:11605"/>
        <dbReference type="ChEBI" id="CHEBI:15378"/>
        <dbReference type="ChEBI" id="CHEBI:30013"/>
        <dbReference type="ChEBI" id="CHEBI:30616"/>
        <dbReference type="ChEBI" id="CHEBI:61977"/>
        <dbReference type="ChEBI" id="CHEBI:456216"/>
        <dbReference type="EC" id="2.7.11.1"/>
    </reaction>
</comment>
<comment type="similarity">
    <text evidence="1">Belongs to the anti-sigma-factor family.</text>
</comment>
<gene>
    <name evidence="1" type="primary">spoIIAB</name>
    <name type="ordered locus">Aflv_1003</name>
</gene>
<reference key="1">
    <citation type="journal article" date="2008" name="Genome Biol.">
        <title>Encapsulated in silica: genome, proteome and physiology of the thermophilic bacterium Anoxybacillus flavithermus WK1.</title>
        <authorList>
            <person name="Saw J.H."/>
            <person name="Mountain B.W."/>
            <person name="Feng L."/>
            <person name="Omelchenko M.V."/>
            <person name="Hou S."/>
            <person name="Saito J.A."/>
            <person name="Stott M.B."/>
            <person name="Li D."/>
            <person name="Zhao G."/>
            <person name="Wu J."/>
            <person name="Galperin M.Y."/>
            <person name="Koonin E.V."/>
            <person name="Makarova K.S."/>
            <person name="Wolf Y.I."/>
            <person name="Rigden D.J."/>
            <person name="Dunfield P.F."/>
            <person name="Wang L."/>
            <person name="Alam M."/>
        </authorList>
    </citation>
    <scope>NUCLEOTIDE SEQUENCE [LARGE SCALE GENOMIC DNA]</scope>
    <source>
        <strain>DSM 21510 / WK1</strain>
    </source>
</reference>
<dbReference type="EC" id="2.7.11.1" evidence="1"/>
<dbReference type="EMBL" id="CP000922">
    <property type="protein sequence ID" value="ACJ33379.1"/>
    <property type="molecule type" value="Genomic_DNA"/>
</dbReference>
<dbReference type="RefSeq" id="WP_004889709.1">
    <property type="nucleotide sequence ID" value="NC_011567.1"/>
</dbReference>
<dbReference type="SMR" id="B7GKG6"/>
<dbReference type="STRING" id="491915.Aflv_1003"/>
<dbReference type="GeneID" id="7037260"/>
<dbReference type="KEGG" id="afl:Aflv_1003"/>
<dbReference type="eggNOG" id="COG2172">
    <property type="taxonomic scope" value="Bacteria"/>
</dbReference>
<dbReference type="HOGENOM" id="CLU_090336_11_0_9"/>
<dbReference type="Proteomes" id="UP000000742">
    <property type="component" value="Chromosome"/>
</dbReference>
<dbReference type="GO" id="GO:0005524">
    <property type="term" value="F:ATP binding"/>
    <property type="evidence" value="ECO:0007669"/>
    <property type="project" value="UniProtKB-KW"/>
</dbReference>
<dbReference type="GO" id="GO:0106310">
    <property type="term" value="F:protein serine kinase activity"/>
    <property type="evidence" value="ECO:0007669"/>
    <property type="project" value="RHEA"/>
</dbReference>
<dbReference type="GO" id="GO:0004674">
    <property type="term" value="F:protein serine/threonine kinase activity"/>
    <property type="evidence" value="ECO:0007669"/>
    <property type="project" value="UniProtKB-KW"/>
</dbReference>
<dbReference type="GO" id="GO:0016989">
    <property type="term" value="F:sigma factor antagonist activity"/>
    <property type="evidence" value="ECO:0007669"/>
    <property type="project" value="InterPro"/>
</dbReference>
<dbReference type="GO" id="GO:0030436">
    <property type="term" value="P:asexual sporulation"/>
    <property type="evidence" value="ECO:0007669"/>
    <property type="project" value="UniProtKB-UniRule"/>
</dbReference>
<dbReference type="GO" id="GO:0042174">
    <property type="term" value="P:negative regulation of sporulation resulting in formation of a cellular spore"/>
    <property type="evidence" value="ECO:0007669"/>
    <property type="project" value="InterPro"/>
</dbReference>
<dbReference type="GO" id="GO:0030435">
    <property type="term" value="P:sporulation resulting in formation of a cellular spore"/>
    <property type="evidence" value="ECO:0007669"/>
    <property type="project" value="UniProtKB-KW"/>
</dbReference>
<dbReference type="Gene3D" id="3.30.565.10">
    <property type="entry name" value="Histidine kinase-like ATPase, C-terminal domain"/>
    <property type="match status" value="1"/>
</dbReference>
<dbReference type="HAMAP" id="MF_00637">
    <property type="entry name" value="Anti_sigma_F"/>
    <property type="match status" value="1"/>
</dbReference>
<dbReference type="InterPro" id="IPR050267">
    <property type="entry name" value="Anti-sigma-factor_SerPK"/>
</dbReference>
<dbReference type="InterPro" id="IPR010194">
    <property type="entry name" value="Anti-sigma_F"/>
</dbReference>
<dbReference type="InterPro" id="IPR036890">
    <property type="entry name" value="HATPase_C_sf"/>
</dbReference>
<dbReference type="NCBIfam" id="TIGR01925">
    <property type="entry name" value="spIIAB"/>
    <property type="match status" value="1"/>
</dbReference>
<dbReference type="PANTHER" id="PTHR35526:SF3">
    <property type="entry name" value="ANTI-SIGMA-F FACTOR RSBW"/>
    <property type="match status" value="1"/>
</dbReference>
<dbReference type="PANTHER" id="PTHR35526">
    <property type="entry name" value="ANTI-SIGMA-F FACTOR RSBW-RELATED"/>
    <property type="match status" value="1"/>
</dbReference>
<dbReference type="Pfam" id="PF13581">
    <property type="entry name" value="HATPase_c_2"/>
    <property type="match status" value="1"/>
</dbReference>
<dbReference type="SMART" id="SM00387">
    <property type="entry name" value="HATPase_c"/>
    <property type="match status" value="1"/>
</dbReference>
<dbReference type="SUPFAM" id="SSF55874">
    <property type="entry name" value="ATPase domain of HSP90 chaperone/DNA topoisomerase II/histidine kinase"/>
    <property type="match status" value="1"/>
</dbReference>